<proteinExistence type="inferred from homology"/>
<organism>
    <name type="scientific">Sorangium cellulosum (strain So ce56)</name>
    <name type="common">Polyangium cellulosum (strain So ce56)</name>
    <dbReference type="NCBI Taxonomy" id="448385"/>
    <lineage>
        <taxon>Bacteria</taxon>
        <taxon>Pseudomonadati</taxon>
        <taxon>Myxococcota</taxon>
        <taxon>Polyangia</taxon>
        <taxon>Polyangiales</taxon>
        <taxon>Polyangiaceae</taxon>
        <taxon>Sorangium</taxon>
    </lineage>
</organism>
<keyword id="KW-1185">Reference proteome</keyword>
<keyword id="KW-0687">Ribonucleoprotein</keyword>
<keyword id="KW-0689">Ribosomal protein</keyword>
<dbReference type="EMBL" id="AM746676">
    <property type="protein sequence ID" value="CAN92566.1"/>
    <property type="molecule type" value="Genomic_DNA"/>
</dbReference>
<dbReference type="SMR" id="A9G209"/>
<dbReference type="STRING" id="448385.sce2407"/>
<dbReference type="KEGG" id="scl:sce2407"/>
<dbReference type="eggNOG" id="COG0267">
    <property type="taxonomic scope" value="Bacteria"/>
</dbReference>
<dbReference type="HOGENOM" id="CLU_190949_0_2_7"/>
<dbReference type="OrthoDB" id="21586at2"/>
<dbReference type="BioCyc" id="SCEL448385:SCE_RS12335-MONOMER"/>
<dbReference type="Proteomes" id="UP000002139">
    <property type="component" value="Chromosome"/>
</dbReference>
<dbReference type="GO" id="GO:0005737">
    <property type="term" value="C:cytoplasm"/>
    <property type="evidence" value="ECO:0007669"/>
    <property type="project" value="UniProtKB-ARBA"/>
</dbReference>
<dbReference type="GO" id="GO:1990904">
    <property type="term" value="C:ribonucleoprotein complex"/>
    <property type="evidence" value="ECO:0007669"/>
    <property type="project" value="UniProtKB-KW"/>
</dbReference>
<dbReference type="GO" id="GO:0005840">
    <property type="term" value="C:ribosome"/>
    <property type="evidence" value="ECO:0007669"/>
    <property type="project" value="UniProtKB-KW"/>
</dbReference>
<dbReference type="GO" id="GO:0003735">
    <property type="term" value="F:structural constituent of ribosome"/>
    <property type="evidence" value="ECO:0007669"/>
    <property type="project" value="InterPro"/>
</dbReference>
<dbReference type="GO" id="GO:0006412">
    <property type="term" value="P:translation"/>
    <property type="evidence" value="ECO:0007669"/>
    <property type="project" value="UniProtKB-UniRule"/>
</dbReference>
<dbReference type="Gene3D" id="2.20.28.120">
    <property type="entry name" value="Ribosomal protein L33"/>
    <property type="match status" value="1"/>
</dbReference>
<dbReference type="HAMAP" id="MF_00294">
    <property type="entry name" value="Ribosomal_bL33"/>
    <property type="match status" value="1"/>
</dbReference>
<dbReference type="InterPro" id="IPR001705">
    <property type="entry name" value="Ribosomal_bL33"/>
</dbReference>
<dbReference type="InterPro" id="IPR018264">
    <property type="entry name" value="Ribosomal_bL33_CS"/>
</dbReference>
<dbReference type="InterPro" id="IPR038584">
    <property type="entry name" value="Ribosomal_bL33_sf"/>
</dbReference>
<dbReference type="InterPro" id="IPR011332">
    <property type="entry name" value="Ribosomal_zn-bd"/>
</dbReference>
<dbReference type="NCBIfam" id="NF001764">
    <property type="entry name" value="PRK00504.1"/>
    <property type="match status" value="1"/>
</dbReference>
<dbReference type="NCBIfam" id="NF001860">
    <property type="entry name" value="PRK00595.1"/>
    <property type="match status" value="1"/>
</dbReference>
<dbReference type="NCBIfam" id="TIGR01023">
    <property type="entry name" value="rpmG_bact"/>
    <property type="match status" value="1"/>
</dbReference>
<dbReference type="Pfam" id="PF00471">
    <property type="entry name" value="Ribosomal_L33"/>
    <property type="match status" value="1"/>
</dbReference>
<dbReference type="SUPFAM" id="SSF57829">
    <property type="entry name" value="Zn-binding ribosomal proteins"/>
    <property type="match status" value="1"/>
</dbReference>
<dbReference type="PROSITE" id="PS00582">
    <property type="entry name" value="RIBOSOMAL_L33"/>
    <property type="match status" value="1"/>
</dbReference>
<accession>A9G209</accession>
<reference key="1">
    <citation type="journal article" date="2007" name="Nat. Biotechnol.">
        <title>Complete genome sequence of the myxobacterium Sorangium cellulosum.</title>
        <authorList>
            <person name="Schneiker S."/>
            <person name="Perlova O."/>
            <person name="Kaiser O."/>
            <person name="Gerth K."/>
            <person name="Alici A."/>
            <person name="Altmeyer M.O."/>
            <person name="Bartels D."/>
            <person name="Bekel T."/>
            <person name="Beyer S."/>
            <person name="Bode E."/>
            <person name="Bode H.B."/>
            <person name="Bolten C.J."/>
            <person name="Choudhuri J.V."/>
            <person name="Doss S."/>
            <person name="Elnakady Y.A."/>
            <person name="Frank B."/>
            <person name="Gaigalat L."/>
            <person name="Goesmann A."/>
            <person name="Groeger C."/>
            <person name="Gross F."/>
            <person name="Jelsbak L."/>
            <person name="Jelsbak L."/>
            <person name="Kalinowski J."/>
            <person name="Kegler C."/>
            <person name="Knauber T."/>
            <person name="Konietzny S."/>
            <person name="Kopp M."/>
            <person name="Krause L."/>
            <person name="Krug D."/>
            <person name="Linke B."/>
            <person name="Mahmud T."/>
            <person name="Martinez-Arias R."/>
            <person name="McHardy A.C."/>
            <person name="Merai M."/>
            <person name="Meyer F."/>
            <person name="Mormann S."/>
            <person name="Munoz-Dorado J."/>
            <person name="Perez J."/>
            <person name="Pradella S."/>
            <person name="Rachid S."/>
            <person name="Raddatz G."/>
            <person name="Rosenau F."/>
            <person name="Rueckert C."/>
            <person name="Sasse F."/>
            <person name="Scharfe M."/>
            <person name="Schuster S.C."/>
            <person name="Suen G."/>
            <person name="Treuner-Lange A."/>
            <person name="Velicer G.J."/>
            <person name="Vorholter F.-J."/>
            <person name="Weissman K.J."/>
            <person name="Welch R.D."/>
            <person name="Wenzel S.C."/>
            <person name="Whitworth D.E."/>
            <person name="Wilhelm S."/>
            <person name="Wittmann C."/>
            <person name="Bloecker H."/>
            <person name="Puehler A."/>
            <person name="Mueller R."/>
        </authorList>
    </citation>
    <scope>NUCLEOTIDE SEQUENCE [LARGE SCALE GENOMIC DNA]</scope>
    <source>
        <strain>So ce56</strain>
    </source>
</reference>
<comment type="similarity">
    <text evidence="1">Belongs to the bacterial ribosomal protein bL33 family.</text>
</comment>
<feature type="chain" id="PRO_0000356675" description="Large ribosomal subunit protein bL33B">
    <location>
        <begin position="1"/>
        <end position="53"/>
    </location>
</feature>
<gene>
    <name evidence="1" type="primary">rpmG2</name>
    <name type="ordered locus">sce2407</name>
</gene>
<name>RL332_SORC5</name>
<sequence>MRDIIKLTCGNCGRANYHTTKNKRTMTDKFVIKKFCPTERKHTEHKEGKISKG</sequence>
<evidence type="ECO:0000255" key="1">
    <source>
        <dbReference type="HAMAP-Rule" id="MF_00294"/>
    </source>
</evidence>
<protein>
    <recommendedName>
        <fullName evidence="1">Large ribosomal subunit protein bL33B</fullName>
    </recommendedName>
    <alternativeName>
        <fullName evidence="1">50S ribosomal protein L33 2</fullName>
    </alternativeName>
</protein>